<dbReference type="EMBL" id="CP001205">
    <property type="protein sequence ID" value="ACK75014.1"/>
    <property type="molecule type" value="Genomic_DNA"/>
</dbReference>
<dbReference type="RefSeq" id="WP_002556715.1">
    <property type="nucleotide sequence ID" value="NC_011728.1"/>
</dbReference>
<dbReference type="SMR" id="B7J146"/>
<dbReference type="GeneID" id="56568105"/>
<dbReference type="KEGG" id="bbz:BbuZS7_0113"/>
<dbReference type="HOGENOM" id="CLU_148710_0_2_12"/>
<dbReference type="Proteomes" id="UP000006901">
    <property type="component" value="Chromosome"/>
</dbReference>
<dbReference type="GO" id="GO:0022627">
    <property type="term" value="C:cytosolic small ribosomal subunit"/>
    <property type="evidence" value="ECO:0007669"/>
    <property type="project" value="TreeGrafter"/>
</dbReference>
<dbReference type="GO" id="GO:0070181">
    <property type="term" value="F:small ribosomal subunit rRNA binding"/>
    <property type="evidence" value="ECO:0007669"/>
    <property type="project" value="TreeGrafter"/>
</dbReference>
<dbReference type="GO" id="GO:0003735">
    <property type="term" value="F:structural constituent of ribosome"/>
    <property type="evidence" value="ECO:0007669"/>
    <property type="project" value="InterPro"/>
</dbReference>
<dbReference type="GO" id="GO:0006412">
    <property type="term" value="P:translation"/>
    <property type="evidence" value="ECO:0007669"/>
    <property type="project" value="UniProtKB-UniRule"/>
</dbReference>
<dbReference type="Gene3D" id="4.10.640.10">
    <property type="entry name" value="Ribosomal protein S18"/>
    <property type="match status" value="1"/>
</dbReference>
<dbReference type="HAMAP" id="MF_00270">
    <property type="entry name" value="Ribosomal_bS18"/>
    <property type="match status" value="1"/>
</dbReference>
<dbReference type="InterPro" id="IPR001648">
    <property type="entry name" value="Ribosomal_bS18"/>
</dbReference>
<dbReference type="InterPro" id="IPR018275">
    <property type="entry name" value="Ribosomal_bS18_CS"/>
</dbReference>
<dbReference type="InterPro" id="IPR036870">
    <property type="entry name" value="Ribosomal_bS18_sf"/>
</dbReference>
<dbReference type="NCBIfam" id="TIGR00165">
    <property type="entry name" value="S18"/>
    <property type="match status" value="1"/>
</dbReference>
<dbReference type="PANTHER" id="PTHR13479">
    <property type="entry name" value="30S RIBOSOMAL PROTEIN S18"/>
    <property type="match status" value="1"/>
</dbReference>
<dbReference type="PANTHER" id="PTHR13479:SF40">
    <property type="entry name" value="SMALL RIBOSOMAL SUBUNIT PROTEIN BS18M"/>
    <property type="match status" value="1"/>
</dbReference>
<dbReference type="Pfam" id="PF01084">
    <property type="entry name" value="Ribosomal_S18"/>
    <property type="match status" value="1"/>
</dbReference>
<dbReference type="PRINTS" id="PR00974">
    <property type="entry name" value="RIBOSOMALS18"/>
</dbReference>
<dbReference type="SUPFAM" id="SSF46911">
    <property type="entry name" value="Ribosomal protein S18"/>
    <property type="match status" value="1"/>
</dbReference>
<dbReference type="PROSITE" id="PS00057">
    <property type="entry name" value="RIBOSOMAL_S18"/>
    <property type="match status" value="1"/>
</dbReference>
<organism>
    <name type="scientific">Borreliella burgdorferi (strain ZS7)</name>
    <name type="common">Borrelia burgdorferi</name>
    <dbReference type="NCBI Taxonomy" id="445985"/>
    <lineage>
        <taxon>Bacteria</taxon>
        <taxon>Pseudomonadati</taxon>
        <taxon>Spirochaetota</taxon>
        <taxon>Spirochaetia</taxon>
        <taxon>Spirochaetales</taxon>
        <taxon>Borreliaceae</taxon>
        <taxon>Borreliella</taxon>
    </lineage>
</organism>
<accession>B7J146</accession>
<sequence length="96" mass="11614">MYKDRDTNQRDSRFENQQDGFKKNSNFRFFKRKSCKFCDSGKHPDYKDFDFLKKFITEQGKILPKRITGTSAKHQRRLALEIKRARYMALLPFVKK</sequence>
<reference key="1">
    <citation type="journal article" date="2011" name="J. Bacteriol.">
        <title>Whole-genome sequences of thirteen isolates of Borrelia burgdorferi.</title>
        <authorList>
            <person name="Schutzer S.E."/>
            <person name="Fraser-Liggett C.M."/>
            <person name="Casjens S.R."/>
            <person name="Qiu W.G."/>
            <person name="Dunn J.J."/>
            <person name="Mongodin E.F."/>
            <person name="Luft B.J."/>
        </authorList>
    </citation>
    <scope>NUCLEOTIDE SEQUENCE [LARGE SCALE GENOMIC DNA]</scope>
    <source>
        <strain>ZS7</strain>
    </source>
</reference>
<proteinExistence type="inferred from homology"/>
<comment type="function">
    <text evidence="1">Binds as a heterodimer with protein bS6 to the central domain of the 16S rRNA, where it helps stabilize the platform of the 30S subunit.</text>
</comment>
<comment type="subunit">
    <text evidence="1">Part of the 30S ribosomal subunit. Forms a tight heterodimer with protein bS6.</text>
</comment>
<comment type="similarity">
    <text evidence="1">Belongs to the bacterial ribosomal protein bS18 family.</text>
</comment>
<name>RS18_BORBZ</name>
<feature type="chain" id="PRO_1000119274" description="Small ribosomal subunit protein bS18">
    <location>
        <begin position="1"/>
        <end position="96"/>
    </location>
</feature>
<keyword id="KW-0687">Ribonucleoprotein</keyword>
<keyword id="KW-0689">Ribosomal protein</keyword>
<keyword id="KW-0694">RNA-binding</keyword>
<keyword id="KW-0699">rRNA-binding</keyword>
<evidence type="ECO:0000255" key="1">
    <source>
        <dbReference type="HAMAP-Rule" id="MF_00270"/>
    </source>
</evidence>
<evidence type="ECO:0000305" key="2"/>
<gene>
    <name evidence="1" type="primary">rpsR</name>
    <name type="ordered locus">BbuZS7_0113</name>
</gene>
<protein>
    <recommendedName>
        <fullName evidence="1">Small ribosomal subunit protein bS18</fullName>
    </recommendedName>
    <alternativeName>
        <fullName evidence="2">30S ribosomal protein S18</fullName>
    </alternativeName>
</protein>